<feature type="chain" id="PRO_1000195033" description="Ribosomal RNA large subunit methyltransferase E">
    <location>
        <begin position="1"/>
        <end position="209"/>
    </location>
</feature>
<feature type="active site" description="Proton acceptor" evidence="1">
    <location>
        <position position="164"/>
    </location>
</feature>
<feature type="binding site" evidence="1">
    <location>
        <position position="63"/>
    </location>
    <ligand>
        <name>S-adenosyl-L-methionine</name>
        <dbReference type="ChEBI" id="CHEBI:59789"/>
    </ligand>
</feature>
<feature type="binding site" evidence="1">
    <location>
        <position position="65"/>
    </location>
    <ligand>
        <name>S-adenosyl-L-methionine</name>
        <dbReference type="ChEBI" id="CHEBI:59789"/>
    </ligand>
</feature>
<feature type="binding site" evidence="1">
    <location>
        <position position="83"/>
    </location>
    <ligand>
        <name>S-adenosyl-L-methionine</name>
        <dbReference type="ChEBI" id="CHEBI:59789"/>
    </ligand>
</feature>
<feature type="binding site" evidence="1">
    <location>
        <position position="99"/>
    </location>
    <ligand>
        <name>S-adenosyl-L-methionine</name>
        <dbReference type="ChEBI" id="CHEBI:59789"/>
    </ligand>
</feature>
<feature type="binding site" evidence="1">
    <location>
        <position position="124"/>
    </location>
    <ligand>
        <name>S-adenosyl-L-methionine</name>
        <dbReference type="ChEBI" id="CHEBI:59789"/>
    </ligand>
</feature>
<name>RLME_YERPY</name>
<comment type="function">
    <text evidence="1">Specifically methylates the uridine in position 2552 of 23S rRNA at the 2'-O position of the ribose in the fully assembled 50S ribosomal subunit.</text>
</comment>
<comment type="catalytic activity">
    <reaction evidence="1">
        <text>uridine(2552) in 23S rRNA + S-adenosyl-L-methionine = 2'-O-methyluridine(2552) in 23S rRNA + S-adenosyl-L-homocysteine + H(+)</text>
        <dbReference type="Rhea" id="RHEA:42720"/>
        <dbReference type="Rhea" id="RHEA-COMP:10202"/>
        <dbReference type="Rhea" id="RHEA-COMP:10203"/>
        <dbReference type="ChEBI" id="CHEBI:15378"/>
        <dbReference type="ChEBI" id="CHEBI:57856"/>
        <dbReference type="ChEBI" id="CHEBI:59789"/>
        <dbReference type="ChEBI" id="CHEBI:65315"/>
        <dbReference type="ChEBI" id="CHEBI:74478"/>
        <dbReference type="EC" id="2.1.1.166"/>
    </reaction>
</comment>
<comment type="subcellular location">
    <subcellularLocation>
        <location evidence="1">Cytoplasm</location>
    </subcellularLocation>
</comment>
<comment type="similarity">
    <text evidence="1">Belongs to the class I-like SAM-binding methyltransferase superfamily. RNA methyltransferase RlmE family.</text>
</comment>
<accession>B1JMH7</accession>
<evidence type="ECO:0000255" key="1">
    <source>
        <dbReference type="HAMAP-Rule" id="MF_01547"/>
    </source>
</evidence>
<sequence length="209" mass="23409">MSNKKRSASSSRWLQEHFSDKYVIQAQKKGLRSRAWFKLDEIQQSDKLFKQGMTVVDLGAAPGGWSQYAVTQIGSKGRVIACDLLPMDPIVGVDFLQGDFRDELVLKALLERVGDKKVQVVMCDMAPNMSGTPAVDIPKSMYLVELALDMCRDVLAPGGSFLVKVFQGDGFDEYLREIRSLFTKVKIRKPDASRARSREVYIVATGRKL</sequence>
<keyword id="KW-0963">Cytoplasm</keyword>
<keyword id="KW-0489">Methyltransferase</keyword>
<keyword id="KW-0698">rRNA processing</keyword>
<keyword id="KW-0949">S-adenosyl-L-methionine</keyword>
<keyword id="KW-0808">Transferase</keyword>
<gene>
    <name evidence="1" type="primary">rlmE</name>
    <name evidence="1" type="synonym">ftsJ</name>
    <name evidence="1" type="synonym">rrmJ</name>
    <name type="ordered locus">YPK_3737</name>
</gene>
<organism>
    <name type="scientific">Yersinia pseudotuberculosis serotype O:3 (strain YPIII)</name>
    <dbReference type="NCBI Taxonomy" id="502800"/>
    <lineage>
        <taxon>Bacteria</taxon>
        <taxon>Pseudomonadati</taxon>
        <taxon>Pseudomonadota</taxon>
        <taxon>Gammaproteobacteria</taxon>
        <taxon>Enterobacterales</taxon>
        <taxon>Yersiniaceae</taxon>
        <taxon>Yersinia</taxon>
    </lineage>
</organism>
<proteinExistence type="inferred from homology"/>
<protein>
    <recommendedName>
        <fullName evidence="1">Ribosomal RNA large subunit methyltransferase E</fullName>
        <ecNumber evidence="1">2.1.1.166</ecNumber>
    </recommendedName>
    <alternativeName>
        <fullName evidence="1">23S rRNA Um2552 methyltransferase</fullName>
    </alternativeName>
    <alternativeName>
        <fullName evidence="1">rRNA (uridine-2'-O-)-methyltransferase</fullName>
    </alternativeName>
</protein>
<reference key="1">
    <citation type="submission" date="2008-02" db="EMBL/GenBank/DDBJ databases">
        <title>Complete sequence of Yersinia pseudotuberculosis YPIII.</title>
        <authorList>
            <consortium name="US DOE Joint Genome Institute"/>
            <person name="Copeland A."/>
            <person name="Lucas S."/>
            <person name="Lapidus A."/>
            <person name="Glavina del Rio T."/>
            <person name="Dalin E."/>
            <person name="Tice H."/>
            <person name="Bruce D."/>
            <person name="Goodwin L."/>
            <person name="Pitluck S."/>
            <person name="Munk A.C."/>
            <person name="Brettin T."/>
            <person name="Detter J.C."/>
            <person name="Han C."/>
            <person name="Tapia R."/>
            <person name="Schmutz J."/>
            <person name="Larimer F."/>
            <person name="Land M."/>
            <person name="Hauser L."/>
            <person name="Challacombe J.F."/>
            <person name="Green L."/>
            <person name="Lindler L.E."/>
            <person name="Nikolich M.P."/>
            <person name="Richardson P."/>
        </authorList>
    </citation>
    <scope>NUCLEOTIDE SEQUENCE [LARGE SCALE GENOMIC DNA]</scope>
    <source>
        <strain>YPIII</strain>
    </source>
</reference>
<dbReference type="EC" id="2.1.1.166" evidence="1"/>
<dbReference type="EMBL" id="CP000950">
    <property type="protein sequence ID" value="ACA70004.1"/>
    <property type="molecule type" value="Genomic_DNA"/>
</dbReference>
<dbReference type="RefSeq" id="WP_002228196.1">
    <property type="nucleotide sequence ID" value="NZ_CP009792.1"/>
</dbReference>
<dbReference type="SMR" id="B1JMH7"/>
<dbReference type="GeneID" id="57975211"/>
<dbReference type="KEGG" id="ypy:YPK_3737"/>
<dbReference type="PATRIC" id="fig|502800.11.peg.85"/>
<dbReference type="GO" id="GO:0005737">
    <property type="term" value="C:cytoplasm"/>
    <property type="evidence" value="ECO:0007669"/>
    <property type="project" value="UniProtKB-SubCell"/>
</dbReference>
<dbReference type="GO" id="GO:0008650">
    <property type="term" value="F:rRNA (uridine-2'-O-)-methyltransferase activity"/>
    <property type="evidence" value="ECO:0007669"/>
    <property type="project" value="UniProtKB-UniRule"/>
</dbReference>
<dbReference type="FunFam" id="3.40.50.150:FF:000005">
    <property type="entry name" value="Ribosomal RNA large subunit methyltransferase E"/>
    <property type="match status" value="1"/>
</dbReference>
<dbReference type="Gene3D" id="3.40.50.150">
    <property type="entry name" value="Vaccinia Virus protein VP39"/>
    <property type="match status" value="1"/>
</dbReference>
<dbReference type="HAMAP" id="MF_01547">
    <property type="entry name" value="RNA_methyltr_E"/>
    <property type="match status" value="1"/>
</dbReference>
<dbReference type="InterPro" id="IPR050082">
    <property type="entry name" value="RNA_methyltr_RlmE"/>
</dbReference>
<dbReference type="InterPro" id="IPR002877">
    <property type="entry name" value="RNA_MeTrfase_FtsJ_dom"/>
</dbReference>
<dbReference type="InterPro" id="IPR015507">
    <property type="entry name" value="rRNA-MeTfrase_E"/>
</dbReference>
<dbReference type="InterPro" id="IPR004512">
    <property type="entry name" value="rRNA_MeTrfase_gammaproteobac"/>
</dbReference>
<dbReference type="InterPro" id="IPR029063">
    <property type="entry name" value="SAM-dependent_MTases_sf"/>
</dbReference>
<dbReference type="NCBIfam" id="NF008390">
    <property type="entry name" value="PRK11188.1"/>
    <property type="match status" value="1"/>
</dbReference>
<dbReference type="NCBIfam" id="TIGR00438">
    <property type="entry name" value="rrmJ"/>
    <property type="match status" value="1"/>
</dbReference>
<dbReference type="PANTHER" id="PTHR10920">
    <property type="entry name" value="RIBOSOMAL RNA METHYLTRANSFERASE"/>
    <property type="match status" value="1"/>
</dbReference>
<dbReference type="PANTHER" id="PTHR10920:SF18">
    <property type="entry name" value="RRNA METHYLTRANSFERASE 2, MITOCHONDRIAL"/>
    <property type="match status" value="1"/>
</dbReference>
<dbReference type="Pfam" id="PF01728">
    <property type="entry name" value="FtsJ"/>
    <property type="match status" value="1"/>
</dbReference>
<dbReference type="PIRSF" id="PIRSF005461">
    <property type="entry name" value="23S_rRNA_mtase"/>
    <property type="match status" value="1"/>
</dbReference>
<dbReference type="SUPFAM" id="SSF53335">
    <property type="entry name" value="S-adenosyl-L-methionine-dependent methyltransferases"/>
    <property type="match status" value="1"/>
</dbReference>